<dbReference type="EC" id="5.-.-.-" evidence="4"/>
<dbReference type="EMBL" id="KT581578">
    <property type="protein sequence ID" value="ALD83631.1"/>
    <property type="molecule type" value="Genomic_DNA"/>
</dbReference>
<dbReference type="SMR" id="A0A0M5KK13"/>
<dbReference type="GO" id="GO:0016853">
    <property type="term" value="F:isomerase activity"/>
    <property type="evidence" value="ECO:0007669"/>
    <property type="project" value="UniProtKB-KW"/>
</dbReference>
<dbReference type="Gene3D" id="3.10.450.50">
    <property type="match status" value="1"/>
</dbReference>
<dbReference type="InterPro" id="IPR032710">
    <property type="entry name" value="NTF2-like_dom_sf"/>
</dbReference>
<dbReference type="InterPro" id="IPR037401">
    <property type="entry name" value="SnoaL-like"/>
</dbReference>
<dbReference type="Pfam" id="PF12680">
    <property type="entry name" value="SnoaL_2"/>
    <property type="match status" value="1"/>
</dbReference>
<dbReference type="SUPFAM" id="SSF54427">
    <property type="entry name" value="NTF2-like"/>
    <property type="match status" value="1"/>
</dbReference>
<keyword id="KW-0413">Isomerase</keyword>
<accession>A0A0M5KK13</accession>
<reference key="1">
    <citation type="journal article" date="2015" name="J. Am. Chem. Soc.">
        <title>Efficient biosynthesis of fungal polyketides containing the dioxabicyclo-octane ring system.</title>
        <authorList>
            <person name="Mao X.M."/>
            <person name="Zhan Z.J."/>
            <person name="Grayson M.N."/>
            <person name="Tang M.C."/>
            <person name="Xu W."/>
            <person name="Li Y.Q."/>
            <person name="Yin W.B."/>
            <person name="Lin H.C."/>
            <person name="Chooi Y.H."/>
            <person name="Houk K.N."/>
            <person name="Tang Y."/>
        </authorList>
    </citation>
    <scope>NUCLEOTIDE SEQUENCE [GENOMIC DNA]</scope>
    <scope>FUNCTION</scope>
</reference>
<protein>
    <recommendedName>
        <fullName evidence="2">Cyclase aurE</fullName>
        <ecNumber evidence="4">5.-.-.-</ecNumber>
    </recommendedName>
    <alternativeName>
        <fullName evidence="2">Aurovertin biosynthesis cluster protein E</fullName>
    </alternativeName>
</protein>
<gene>
    <name evidence="2" type="primary">aurE</name>
</gene>
<feature type="chain" id="PRO_0000443969" description="Cyclase aurE">
    <location>
        <begin position="1"/>
        <end position="136"/>
    </location>
</feature>
<sequence length="136" mass="15402">MSTSCSNPDDQVKARNDKFMAALNDATDIDLVMSFFSPDVSYSDFAFEAVNMDFTSTRDYMDKMFHAVDDLHLTQVSLTGDKDFTASEWVMTYKLKSSDKVGEVVKMRGVSLSWYDAQGLIVRNNDYSLKWSGDID</sequence>
<proteinExistence type="inferred from homology"/>
<name>AURE_CALAK</name>
<organism>
    <name type="scientific">Calcarisporium arbuscula</name>
    <name type="common">Dendryphion arbuscula</name>
    <dbReference type="NCBI Taxonomy" id="240499"/>
    <lineage>
        <taxon>Eukaryota</taxon>
        <taxon>Fungi</taxon>
        <taxon>Dikarya</taxon>
        <taxon>Ascomycota</taxon>
        <taxon>Pezizomycotina</taxon>
        <taxon>Sordariomycetes</taxon>
        <taxon>Hypocreomycetidae</taxon>
        <taxon>Hypocreales</taxon>
        <taxon>Hypocreales incertae sedis</taxon>
        <taxon>Calcarisporium</taxon>
    </lineage>
</organism>
<comment type="function">
    <text evidence="1">Cyclase; part of the gene cluster that mediates the biosynthesis of aurovertins, fungal polyketides that exhibit potent inhibition of adenosine triphosphate synthase (PubMed:26340065). Tha biosynthesis starts with the HR-PKS aurA that selects propionate as the starter unit; synthesizes a hexa-ene chain through the repeated functions of the KR and DH domains in the first six iterations; selectively introduces three alpha-methyl substitutions at C4, C6, and C16 using the S-adensylmethionine-dependent cMET; and shuts off KR and DH in the last three iterations to afford a 1,3,5-triketo portion that can undergo intramolecular cyclization to yield the alpha-pyrone intermediate (PubMed:26340065). AurE may act as a cyclase and enhances the rate of pyrone formation and product release of aurA (PubMed:26340065). The methyltransferase aurB then methylates the C17 hydroxyl group (PubMed:26340065). C17 methylation is required to initiate epoxidation by the downstream monooxygenase aurC (PubMed:26340065). The monooxygenase aurC and the epoxide hydrolase aurD can iteratively transform the terminal triene portion of the methylated precursor into the dioxabicyclo[3.2.1]octane scaffold of aurovertin E. Epoxidation modifications of the precursor occur in two separate steps; bis-epoxidation of the two terminal olefins takes place first, followed by another epoxidation that occurs at C7-C8 after tetrahydrofuran formation (PubMed:26340065). The O-acyltransferase aurG converts aurovertin E to aurovertin A (PubMed:26340065).</text>
</comment>
<comment type="pathway">
    <text evidence="1">Polyketide biosynthesis.</text>
</comment>
<comment type="similarity">
    <text evidence="3">Belongs to the aurE cyclase family.</text>
</comment>
<evidence type="ECO:0000269" key="1">
    <source>
    </source>
</evidence>
<evidence type="ECO:0000303" key="2">
    <source>
    </source>
</evidence>
<evidence type="ECO:0000305" key="3"/>
<evidence type="ECO:0000305" key="4">
    <source>
    </source>
</evidence>